<feature type="chain" id="PRO_1000212499" description="Phosphatidylserine decarboxylase beta chain" evidence="1">
    <location>
        <begin position="1"/>
        <end position="187"/>
    </location>
</feature>
<feature type="chain" id="PRO_1000212500" description="Phosphatidylserine decarboxylase alpha chain" evidence="1">
    <location>
        <begin position="188"/>
        <end position="231"/>
    </location>
</feature>
<feature type="active site" description="Schiff-base intermediate with substrate; via pyruvic acid" evidence="1">
    <location>
        <position position="188"/>
    </location>
</feature>
<feature type="site" description="Cleavage (non-hydrolytic); by autocatalysis" evidence="1">
    <location>
        <begin position="187"/>
        <end position="188"/>
    </location>
</feature>
<feature type="modified residue" description="Pyruvic acid (Ser); by autocatalysis" evidence="1">
    <location>
        <position position="188"/>
    </location>
</feature>
<protein>
    <recommendedName>
        <fullName evidence="1">Phosphatidylserine decarboxylase proenzyme</fullName>
        <ecNumber evidence="1">4.1.1.65</ecNumber>
    </recommendedName>
    <component>
        <recommendedName>
            <fullName evidence="1">Phosphatidylserine decarboxylase alpha chain</fullName>
        </recommendedName>
    </component>
    <component>
        <recommendedName>
            <fullName evidence="1">Phosphatidylserine decarboxylase beta chain</fullName>
        </recommendedName>
    </component>
</protein>
<reference key="1">
    <citation type="journal article" date="2009" name="BMC Genomics">
        <title>Analysis of the Rickettsia africae genome reveals that virulence acquisition in Rickettsia species may be explained by genome reduction.</title>
        <authorList>
            <person name="Fournier P.-E."/>
            <person name="El Karkouri K."/>
            <person name="Leroy Q."/>
            <person name="Robert C."/>
            <person name="Giumelli B."/>
            <person name="Renesto P."/>
            <person name="Socolovschi C."/>
            <person name="Parola P."/>
            <person name="Audic S."/>
            <person name="Raoult D."/>
        </authorList>
    </citation>
    <scope>NUCLEOTIDE SEQUENCE [LARGE SCALE GENOMIC DNA]</scope>
    <source>
        <strain>ESF-5</strain>
    </source>
</reference>
<sequence>MKQYNDLFKIIHREGYIFIASFALVSFLLASFNEKLGCIGCIATAWCIYFFRNPDRFVPISDDLVISPADGIIQEIKEALPPPELGLGDVEMIRVSIFLNIFNVHVNRIPANGKILALHYNPGKFFNASLDKASIYNERQSVLMETAQGQKIVFVQIAGLIARRIVCDLEEGNEVKTGERYGIIRFGSRVDVYLPLKTALLVSKGQTAIGGETIIADFGRKKTTEFKFERK</sequence>
<comment type="function">
    <text evidence="1">Catalyzes the formation of phosphatidylethanolamine (PtdEtn) from phosphatidylserine (PtdSer).</text>
</comment>
<comment type="catalytic activity">
    <reaction evidence="1">
        <text>a 1,2-diacyl-sn-glycero-3-phospho-L-serine + H(+) = a 1,2-diacyl-sn-glycero-3-phosphoethanolamine + CO2</text>
        <dbReference type="Rhea" id="RHEA:20828"/>
        <dbReference type="ChEBI" id="CHEBI:15378"/>
        <dbReference type="ChEBI" id="CHEBI:16526"/>
        <dbReference type="ChEBI" id="CHEBI:57262"/>
        <dbReference type="ChEBI" id="CHEBI:64612"/>
        <dbReference type="EC" id="4.1.1.65"/>
    </reaction>
</comment>
<comment type="cofactor">
    <cofactor evidence="1">
        <name>pyruvate</name>
        <dbReference type="ChEBI" id="CHEBI:15361"/>
    </cofactor>
    <text evidence="1">Binds 1 pyruvoyl group covalently per subunit.</text>
</comment>
<comment type="pathway">
    <text evidence="1">Phospholipid metabolism; phosphatidylethanolamine biosynthesis; phosphatidylethanolamine from CDP-diacylglycerol: step 2/2.</text>
</comment>
<comment type="subunit">
    <text evidence="1">Heterodimer of a large membrane-associated beta subunit and a small pyruvoyl-containing alpha subunit.</text>
</comment>
<comment type="subcellular location">
    <subcellularLocation>
        <location evidence="1">Cell membrane</location>
        <topology evidence="1">Peripheral membrane protein</topology>
    </subcellularLocation>
</comment>
<comment type="PTM">
    <text evidence="1">Is synthesized initially as an inactive proenzyme. Formation of the active enzyme involves a self-maturation process in which the active site pyruvoyl group is generated from an internal serine residue via an autocatalytic post-translational modification. Two non-identical subunits are generated from the proenzyme in this reaction, and the pyruvate is formed at the N-terminus of the alpha chain, which is derived from the carboxyl end of the proenzyme. The post-translation cleavage follows an unusual pathway, termed non-hydrolytic serinolysis, in which the side chain hydroxyl group of the serine supplies its oxygen atom to form the C-terminus of the beta chain, while the remainder of the serine residue undergoes an oxidative deamination to produce ammonia and the pyruvoyl prosthetic group on the alpha chain.</text>
</comment>
<comment type="similarity">
    <text evidence="1">Belongs to the phosphatidylserine decarboxylase family. PSD-A subfamily.</text>
</comment>
<accession>C3PMT8</accession>
<evidence type="ECO:0000255" key="1">
    <source>
        <dbReference type="HAMAP-Rule" id="MF_00664"/>
    </source>
</evidence>
<gene>
    <name evidence="1" type="primary">psd</name>
    <name type="ordered locus">RAF_ORF0302</name>
</gene>
<organism>
    <name type="scientific">Rickettsia africae (strain ESF-5)</name>
    <dbReference type="NCBI Taxonomy" id="347255"/>
    <lineage>
        <taxon>Bacteria</taxon>
        <taxon>Pseudomonadati</taxon>
        <taxon>Pseudomonadota</taxon>
        <taxon>Alphaproteobacteria</taxon>
        <taxon>Rickettsiales</taxon>
        <taxon>Rickettsiaceae</taxon>
        <taxon>Rickettsieae</taxon>
        <taxon>Rickettsia</taxon>
        <taxon>spotted fever group</taxon>
    </lineage>
</organism>
<proteinExistence type="inferred from homology"/>
<keyword id="KW-1003">Cell membrane</keyword>
<keyword id="KW-0210">Decarboxylase</keyword>
<keyword id="KW-0444">Lipid biosynthesis</keyword>
<keyword id="KW-0443">Lipid metabolism</keyword>
<keyword id="KW-0456">Lyase</keyword>
<keyword id="KW-0472">Membrane</keyword>
<keyword id="KW-0594">Phospholipid biosynthesis</keyword>
<keyword id="KW-1208">Phospholipid metabolism</keyword>
<keyword id="KW-0670">Pyruvate</keyword>
<keyword id="KW-0865">Zymogen</keyword>
<name>PSD_RICAE</name>
<dbReference type="EC" id="4.1.1.65" evidence="1"/>
<dbReference type="EMBL" id="CP001612">
    <property type="protein sequence ID" value="ACP53248.1"/>
    <property type="molecule type" value="Genomic_DNA"/>
</dbReference>
<dbReference type="RefSeq" id="WP_004996349.1">
    <property type="nucleotide sequence ID" value="NC_012633.1"/>
</dbReference>
<dbReference type="SMR" id="C3PMT8"/>
<dbReference type="KEGG" id="raf:RAF_ORF0302"/>
<dbReference type="HOGENOM" id="CLU_072492_0_0_5"/>
<dbReference type="UniPathway" id="UPA00558">
    <property type="reaction ID" value="UER00616"/>
</dbReference>
<dbReference type="Proteomes" id="UP000002305">
    <property type="component" value="Chromosome"/>
</dbReference>
<dbReference type="GO" id="GO:0005886">
    <property type="term" value="C:plasma membrane"/>
    <property type="evidence" value="ECO:0007669"/>
    <property type="project" value="UniProtKB-SubCell"/>
</dbReference>
<dbReference type="GO" id="GO:0004609">
    <property type="term" value="F:phosphatidylserine decarboxylase activity"/>
    <property type="evidence" value="ECO:0007669"/>
    <property type="project" value="UniProtKB-UniRule"/>
</dbReference>
<dbReference type="GO" id="GO:0006646">
    <property type="term" value="P:phosphatidylethanolamine biosynthetic process"/>
    <property type="evidence" value="ECO:0007669"/>
    <property type="project" value="UniProtKB-UniRule"/>
</dbReference>
<dbReference type="HAMAP" id="MF_00664">
    <property type="entry name" value="PS_decarb_PSD_A"/>
    <property type="match status" value="1"/>
</dbReference>
<dbReference type="InterPro" id="IPR003817">
    <property type="entry name" value="PS_Dcarbxylase"/>
</dbReference>
<dbReference type="InterPro" id="IPR033175">
    <property type="entry name" value="PSD-A"/>
</dbReference>
<dbReference type="NCBIfam" id="NF003677">
    <property type="entry name" value="PRK05305.1-1"/>
    <property type="match status" value="1"/>
</dbReference>
<dbReference type="NCBIfam" id="NF003678">
    <property type="entry name" value="PRK05305.1-2"/>
    <property type="match status" value="1"/>
</dbReference>
<dbReference type="NCBIfam" id="NF003679">
    <property type="entry name" value="PRK05305.1-3"/>
    <property type="match status" value="1"/>
</dbReference>
<dbReference type="NCBIfam" id="NF003681">
    <property type="entry name" value="PRK05305.2-1"/>
    <property type="match status" value="1"/>
</dbReference>
<dbReference type="NCBIfam" id="NF003685">
    <property type="entry name" value="PRK05305.2-5"/>
    <property type="match status" value="1"/>
</dbReference>
<dbReference type="PANTHER" id="PTHR35809">
    <property type="entry name" value="ARCHAETIDYLSERINE DECARBOXYLASE PROENZYME-RELATED"/>
    <property type="match status" value="1"/>
</dbReference>
<dbReference type="PANTHER" id="PTHR35809:SF1">
    <property type="entry name" value="ARCHAETIDYLSERINE DECARBOXYLASE PROENZYME-RELATED"/>
    <property type="match status" value="1"/>
</dbReference>
<dbReference type="Pfam" id="PF02666">
    <property type="entry name" value="PS_Dcarbxylase"/>
    <property type="match status" value="1"/>
</dbReference>